<comment type="function">
    <text evidence="1">One of the components of the core complex of photosystem II (PSII). PSII is a light-driven water:plastoquinone oxidoreductase that uses light energy to abstract electrons from H(2)O, generating O(2) and a proton gradient subsequently used for ATP formation. It consists of a core antenna complex that captures photons, and an electron transfer chain that converts photonic excitation into a charge separation.</text>
</comment>
<comment type="subunit">
    <text evidence="2">PSII is composed of 1 copy each of membrane proteins PsbA, PsbB, PsbC, PsbD, PsbE, PsbF, PsbH, PsbI, PsbJ, PsbK, PsbL, PsbM, PsbT, PsbX, PsbY, Psb30/Ycf12, peripheral proteins PsbO, CyanoQ (PsbQ), PsbU, PsbV and a large number of cofactors. It forms dimeric complexes.</text>
</comment>
<comment type="subcellular location">
    <subcellularLocation>
        <location evidence="1">Cellular thylakoid membrane</location>
        <topology evidence="1">Single-pass membrane protein</topology>
    </subcellularLocation>
</comment>
<comment type="similarity">
    <text evidence="1">Belongs to the PsbJ family.</text>
</comment>
<gene>
    <name evidence="1" type="primary">psbJ</name>
    <name type="ordered locus">P9515_03331</name>
</gene>
<proteinExistence type="inferred from homology"/>
<dbReference type="EMBL" id="CP000552">
    <property type="protein sequence ID" value="ABM71542.1"/>
    <property type="molecule type" value="Genomic_DNA"/>
</dbReference>
<dbReference type="RefSeq" id="WP_011131937.1">
    <property type="nucleotide sequence ID" value="NC_008817.1"/>
</dbReference>
<dbReference type="SMR" id="A2BUT1"/>
<dbReference type="STRING" id="167542.P9515_03331"/>
<dbReference type="GeneID" id="60201281"/>
<dbReference type="KEGG" id="pmc:P9515_03331"/>
<dbReference type="eggNOG" id="ENOG5030SSF">
    <property type="taxonomic scope" value="Bacteria"/>
</dbReference>
<dbReference type="HOGENOM" id="CLU_2829784_0_0_3"/>
<dbReference type="OrthoDB" id="466474at2"/>
<dbReference type="Proteomes" id="UP000001589">
    <property type="component" value="Chromosome"/>
</dbReference>
<dbReference type="GO" id="GO:0009539">
    <property type="term" value="C:photosystem II reaction center"/>
    <property type="evidence" value="ECO:0007669"/>
    <property type="project" value="InterPro"/>
</dbReference>
<dbReference type="GO" id="GO:0031676">
    <property type="term" value="C:plasma membrane-derived thylakoid membrane"/>
    <property type="evidence" value="ECO:0007669"/>
    <property type="project" value="UniProtKB-SubCell"/>
</dbReference>
<dbReference type="GO" id="GO:0015979">
    <property type="term" value="P:photosynthesis"/>
    <property type="evidence" value="ECO:0007669"/>
    <property type="project" value="UniProtKB-UniRule"/>
</dbReference>
<dbReference type="Gene3D" id="6.10.250.2070">
    <property type="match status" value="1"/>
</dbReference>
<dbReference type="HAMAP" id="MF_01305">
    <property type="entry name" value="PSII_PsbJ"/>
    <property type="match status" value="1"/>
</dbReference>
<dbReference type="InterPro" id="IPR002682">
    <property type="entry name" value="PSII_PsbJ"/>
</dbReference>
<dbReference type="InterPro" id="IPR037267">
    <property type="entry name" value="PSII_PsbJ_sf"/>
</dbReference>
<dbReference type="NCBIfam" id="NF002722">
    <property type="entry name" value="PRK02565.1"/>
    <property type="match status" value="1"/>
</dbReference>
<dbReference type="PANTHER" id="PTHR34812">
    <property type="entry name" value="PHOTOSYSTEM II REACTION CENTER PROTEIN J"/>
    <property type="match status" value="1"/>
</dbReference>
<dbReference type="PANTHER" id="PTHR34812:SF3">
    <property type="entry name" value="PHOTOSYSTEM II REACTION CENTER PROTEIN J"/>
    <property type="match status" value="1"/>
</dbReference>
<dbReference type="Pfam" id="PF01788">
    <property type="entry name" value="PsbJ"/>
    <property type="match status" value="1"/>
</dbReference>
<dbReference type="SUPFAM" id="SSF161021">
    <property type="entry name" value="Photosystem II reaction center protein J, PsbJ"/>
    <property type="match status" value="1"/>
</dbReference>
<evidence type="ECO:0000255" key="1">
    <source>
        <dbReference type="HAMAP-Rule" id="MF_01305"/>
    </source>
</evidence>
<evidence type="ECO:0000305" key="2"/>
<accession>A2BUT1</accession>
<name>PSBJ_PROM5</name>
<protein>
    <recommendedName>
        <fullName evidence="1">Photosystem II reaction center protein J</fullName>
        <shortName evidence="1">PSII-J</shortName>
    </recommendedName>
</protein>
<keyword id="KW-0472">Membrane</keyword>
<keyword id="KW-0602">Photosynthesis</keyword>
<keyword id="KW-0604">Photosystem II</keyword>
<keyword id="KW-0674">Reaction center</keyword>
<keyword id="KW-0793">Thylakoid</keyword>
<keyword id="KW-0812">Transmembrane</keyword>
<keyword id="KW-1133">Transmembrane helix</keyword>
<reference key="1">
    <citation type="journal article" date="2007" name="PLoS Genet.">
        <title>Patterns and implications of gene gain and loss in the evolution of Prochlorococcus.</title>
        <authorList>
            <person name="Kettler G.C."/>
            <person name="Martiny A.C."/>
            <person name="Huang K."/>
            <person name="Zucker J."/>
            <person name="Coleman M.L."/>
            <person name="Rodrigue S."/>
            <person name="Chen F."/>
            <person name="Lapidus A."/>
            <person name="Ferriera S."/>
            <person name="Johnson J."/>
            <person name="Steglich C."/>
            <person name="Church G.M."/>
            <person name="Richardson P."/>
            <person name="Chisholm S.W."/>
        </authorList>
    </citation>
    <scope>NUCLEOTIDE SEQUENCE [LARGE SCALE GENOMIC DNA]</scope>
    <source>
        <strain>MIT 9515</strain>
    </source>
</reference>
<sequence>MSKLKGPDGRIPDRLPDGRPAVAWERRWTEGTLPLWLVATAGGIAVIFVLGIFFYGSYQGVGAG</sequence>
<feature type="chain" id="PRO_0000292231" description="Photosystem II reaction center protein J">
    <location>
        <begin position="1"/>
        <end position="64"/>
    </location>
</feature>
<feature type="transmembrane region" description="Helical" evidence="1">
    <location>
        <begin position="35"/>
        <end position="55"/>
    </location>
</feature>
<organism>
    <name type="scientific">Prochlorococcus marinus (strain MIT 9515)</name>
    <dbReference type="NCBI Taxonomy" id="167542"/>
    <lineage>
        <taxon>Bacteria</taxon>
        <taxon>Bacillati</taxon>
        <taxon>Cyanobacteriota</taxon>
        <taxon>Cyanophyceae</taxon>
        <taxon>Synechococcales</taxon>
        <taxon>Prochlorococcaceae</taxon>
        <taxon>Prochlorococcus</taxon>
    </lineage>
</organism>